<dbReference type="EC" id="2.4.2.9" evidence="1"/>
<dbReference type="EMBL" id="CP001071">
    <property type="protein sequence ID" value="ACD03958.1"/>
    <property type="molecule type" value="Genomic_DNA"/>
</dbReference>
<dbReference type="RefSeq" id="WP_012419173.1">
    <property type="nucleotide sequence ID" value="NZ_CP071807.1"/>
</dbReference>
<dbReference type="SMR" id="B2ULR4"/>
<dbReference type="STRING" id="349741.Amuc_0113"/>
<dbReference type="PaxDb" id="349741-Amuc_0113"/>
<dbReference type="GeneID" id="60879539"/>
<dbReference type="KEGG" id="amu:Amuc_0113"/>
<dbReference type="eggNOG" id="COG2065">
    <property type="taxonomic scope" value="Bacteria"/>
</dbReference>
<dbReference type="HOGENOM" id="CLU_094234_2_1_0"/>
<dbReference type="OrthoDB" id="9802227at2"/>
<dbReference type="BioCyc" id="AMUC349741:G1GBX-133-MONOMER"/>
<dbReference type="Proteomes" id="UP000001031">
    <property type="component" value="Chromosome"/>
</dbReference>
<dbReference type="GO" id="GO:0004845">
    <property type="term" value="F:uracil phosphoribosyltransferase activity"/>
    <property type="evidence" value="ECO:0007669"/>
    <property type="project" value="UniProtKB-UniRule"/>
</dbReference>
<dbReference type="GO" id="GO:0006355">
    <property type="term" value="P:regulation of DNA-templated transcription"/>
    <property type="evidence" value="ECO:0007669"/>
    <property type="project" value="UniProtKB-UniRule"/>
</dbReference>
<dbReference type="CDD" id="cd06223">
    <property type="entry name" value="PRTases_typeI"/>
    <property type="match status" value="1"/>
</dbReference>
<dbReference type="Gene3D" id="3.40.50.2020">
    <property type="match status" value="1"/>
</dbReference>
<dbReference type="HAMAP" id="MF_01219">
    <property type="entry name" value="PyrR"/>
    <property type="match status" value="1"/>
</dbReference>
<dbReference type="InterPro" id="IPR000836">
    <property type="entry name" value="PRibTrfase_dom"/>
</dbReference>
<dbReference type="InterPro" id="IPR029057">
    <property type="entry name" value="PRTase-like"/>
</dbReference>
<dbReference type="InterPro" id="IPR023050">
    <property type="entry name" value="PyrR"/>
</dbReference>
<dbReference type="InterPro" id="IPR050137">
    <property type="entry name" value="PyrR_bifunctional"/>
</dbReference>
<dbReference type="NCBIfam" id="NF003545">
    <property type="entry name" value="PRK05205.1-1"/>
    <property type="match status" value="1"/>
</dbReference>
<dbReference type="NCBIfam" id="NF003549">
    <property type="entry name" value="PRK05205.1-5"/>
    <property type="match status" value="1"/>
</dbReference>
<dbReference type="PANTHER" id="PTHR11608">
    <property type="entry name" value="BIFUNCTIONAL PROTEIN PYRR"/>
    <property type="match status" value="1"/>
</dbReference>
<dbReference type="PANTHER" id="PTHR11608:SF0">
    <property type="entry name" value="BIFUNCTIONAL PROTEIN PYRR"/>
    <property type="match status" value="1"/>
</dbReference>
<dbReference type="Pfam" id="PF00156">
    <property type="entry name" value="Pribosyltran"/>
    <property type="match status" value="1"/>
</dbReference>
<dbReference type="SUPFAM" id="SSF53271">
    <property type="entry name" value="PRTase-like"/>
    <property type="match status" value="1"/>
</dbReference>
<name>PYRR_AKKM8</name>
<reference key="1">
    <citation type="journal article" date="2011" name="PLoS ONE">
        <title>The genome of Akkermansia muciniphila, a dedicated intestinal mucin degrader, and its use in exploring intestinal metagenomes.</title>
        <authorList>
            <person name="van Passel M.W."/>
            <person name="Kant R."/>
            <person name="Zoetendal E.G."/>
            <person name="Plugge C.M."/>
            <person name="Derrien M."/>
            <person name="Malfatti S.A."/>
            <person name="Chain P.S."/>
            <person name="Woyke T."/>
            <person name="Palva A."/>
            <person name="de Vos W.M."/>
            <person name="Smidt H."/>
        </authorList>
    </citation>
    <scope>NUCLEOTIDE SEQUENCE [LARGE SCALE GENOMIC DNA]</scope>
    <source>
        <strain>ATCC BAA-835 / DSM 22959 / JCM 33894 / BCRC 81048 / CCUG 64013 / CIP 107961 / Muc</strain>
    </source>
</reference>
<proteinExistence type="inferred from homology"/>
<feature type="chain" id="PRO_1000139183" description="Bifunctional protein PyrR">
    <location>
        <begin position="1"/>
        <end position="177"/>
    </location>
</feature>
<feature type="short sequence motif" description="PRPP-binding" evidence="1">
    <location>
        <begin position="99"/>
        <end position="111"/>
    </location>
</feature>
<protein>
    <recommendedName>
        <fullName evidence="1">Bifunctional protein PyrR</fullName>
    </recommendedName>
    <domain>
        <recommendedName>
            <fullName evidence="1">Pyrimidine operon regulatory protein</fullName>
        </recommendedName>
    </domain>
    <domain>
        <recommendedName>
            <fullName evidence="1">Uracil phosphoribosyltransferase</fullName>
            <shortName evidence="1">UPRTase</shortName>
            <ecNumber evidence="1">2.4.2.9</ecNumber>
        </recommendedName>
    </domain>
</protein>
<gene>
    <name evidence="1" type="primary">pyrR</name>
    <name type="ordered locus">Amuc_0113</name>
</gene>
<comment type="function">
    <text evidence="1">Regulates the transcription of the pyrimidine nucleotide (pyr) operon in response to exogenous pyrimidines.</text>
</comment>
<comment type="function">
    <text evidence="1">Also displays a weak uracil phosphoribosyltransferase activity which is not physiologically significant.</text>
</comment>
<comment type="catalytic activity">
    <reaction evidence="1">
        <text>UMP + diphosphate = 5-phospho-alpha-D-ribose 1-diphosphate + uracil</text>
        <dbReference type="Rhea" id="RHEA:13017"/>
        <dbReference type="ChEBI" id="CHEBI:17568"/>
        <dbReference type="ChEBI" id="CHEBI:33019"/>
        <dbReference type="ChEBI" id="CHEBI:57865"/>
        <dbReference type="ChEBI" id="CHEBI:58017"/>
        <dbReference type="EC" id="2.4.2.9"/>
    </reaction>
</comment>
<comment type="similarity">
    <text evidence="1">Belongs to the purine/pyrimidine phosphoribosyltransferase family. PyrR subfamily.</text>
</comment>
<keyword id="KW-0328">Glycosyltransferase</keyword>
<keyword id="KW-1185">Reference proteome</keyword>
<keyword id="KW-0804">Transcription</keyword>
<keyword id="KW-0805">Transcription regulation</keyword>
<keyword id="KW-0808">Transferase</keyword>
<organism>
    <name type="scientific">Akkermansia muciniphila (strain ATCC BAA-835 / DSM 22959 / JCM 33894 / BCRC 81048 / CCUG 64013 / CIP 107961 / Muc)</name>
    <dbReference type="NCBI Taxonomy" id="349741"/>
    <lineage>
        <taxon>Bacteria</taxon>
        <taxon>Pseudomonadati</taxon>
        <taxon>Verrucomicrobiota</taxon>
        <taxon>Verrucomicrobiia</taxon>
        <taxon>Verrucomicrobiales</taxon>
        <taxon>Akkermansiaceae</taxon>
        <taxon>Akkermansia</taxon>
    </lineage>
</organism>
<sequence length="177" mass="19303">MTPPSQEIVLDGPGISRALERMAHGIVARFPGEPLAIVGLLSQGDVIARRLVDKVKELGVEAQYGSIDISLYRDDIFKLEARPSLRSSNLPFSTDDMRVVLVDDVLYTGRTIRAALNALFDYGRPARIELACLIDRGGREVPIQPDYTGHVLDHAGAKVIVSMKEADGEDSVVIPSH</sequence>
<evidence type="ECO:0000255" key="1">
    <source>
        <dbReference type="HAMAP-Rule" id="MF_01219"/>
    </source>
</evidence>
<accession>B2ULR4</accession>